<comment type="function">
    <text evidence="1">Binds to the 23S rRNA.</text>
</comment>
<comment type="similarity">
    <text evidence="1">Belongs to the bacterial ribosomal protein bL9 family.</text>
</comment>
<proteinExistence type="inferred from homology"/>
<keyword id="KW-1185">Reference proteome</keyword>
<keyword id="KW-0687">Ribonucleoprotein</keyword>
<keyword id="KW-0689">Ribosomal protein</keyword>
<keyword id="KW-0694">RNA-binding</keyword>
<keyword id="KW-0699">rRNA-binding</keyword>
<protein>
    <recommendedName>
        <fullName evidence="1">Large ribosomal subunit protein bL9</fullName>
    </recommendedName>
    <alternativeName>
        <fullName evidence="2">50S ribosomal protein L9</fullName>
    </alternativeName>
</protein>
<feature type="chain" id="PRO_1000196254" description="Large ribosomal subunit protein bL9">
    <location>
        <begin position="1"/>
        <end position="189"/>
    </location>
</feature>
<organism>
    <name type="scientific">Methylocella silvestris (strain DSM 15510 / CIP 108128 / LMG 27833 / NCIMB 13906 / BL2)</name>
    <dbReference type="NCBI Taxonomy" id="395965"/>
    <lineage>
        <taxon>Bacteria</taxon>
        <taxon>Pseudomonadati</taxon>
        <taxon>Pseudomonadota</taxon>
        <taxon>Alphaproteobacteria</taxon>
        <taxon>Hyphomicrobiales</taxon>
        <taxon>Beijerinckiaceae</taxon>
        <taxon>Methylocella</taxon>
    </lineage>
</organism>
<reference key="1">
    <citation type="journal article" date="2010" name="J. Bacteriol.">
        <title>Complete genome sequence of the aerobic facultative methanotroph Methylocella silvestris BL2.</title>
        <authorList>
            <person name="Chen Y."/>
            <person name="Crombie A."/>
            <person name="Rahman M.T."/>
            <person name="Dedysh S.N."/>
            <person name="Liesack W."/>
            <person name="Stott M.B."/>
            <person name="Alam M."/>
            <person name="Theisen A.R."/>
            <person name="Murrell J.C."/>
            <person name="Dunfield P.F."/>
        </authorList>
    </citation>
    <scope>NUCLEOTIDE SEQUENCE [LARGE SCALE GENOMIC DNA]</scope>
    <source>
        <strain>DSM 15510 / CIP 108128 / LMG 27833 / NCIMB 13906 / BL2</strain>
    </source>
</reference>
<name>RL9_METSB</name>
<accession>B8ESI1</accession>
<sequence>MEVILMERVAKLGQMGDTVRVKDGYARNFLLPGGKALRATAANKARFDTQRAQLEARNLELKSEASAVAEKLDGQAFVIIRQAGETGHLYGSVSPRDIAEVVTAGGFSANRNQIVLASPIKSIGLHEVPVHLHPEVVATITVNVARSPAEAERQAAGEEVNVVEEATMDDLGLEVGAALADAGGSLGDR</sequence>
<gene>
    <name evidence="1" type="primary">rplI</name>
    <name type="ordered locus">Msil_0901</name>
</gene>
<dbReference type="EMBL" id="CP001280">
    <property type="protein sequence ID" value="ACK49871.1"/>
    <property type="molecule type" value="Genomic_DNA"/>
</dbReference>
<dbReference type="RefSeq" id="WP_012589941.1">
    <property type="nucleotide sequence ID" value="NC_011666.1"/>
</dbReference>
<dbReference type="SMR" id="B8ESI1"/>
<dbReference type="STRING" id="395965.Msil_0901"/>
<dbReference type="KEGG" id="msl:Msil_0901"/>
<dbReference type="eggNOG" id="COG0359">
    <property type="taxonomic scope" value="Bacteria"/>
</dbReference>
<dbReference type="HOGENOM" id="CLU_078938_1_0_5"/>
<dbReference type="OrthoDB" id="9788336at2"/>
<dbReference type="Proteomes" id="UP000002257">
    <property type="component" value="Chromosome"/>
</dbReference>
<dbReference type="GO" id="GO:1990904">
    <property type="term" value="C:ribonucleoprotein complex"/>
    <property type="evidence" value="ECO:0007669"/>
    <property type="project" value="UniProtKB-KW"/>
</dbReference>
<dbReference type="GO" id="GO:0005840">
    <property type="term" value="C:ribosome"/>
    <property type="evidence" value="ECO:0007669"/>
    <property type="project" value="UniProtKB-KW"/>
</dbReference>
<dbReference type="GO" id="GO:0019843">
    <property type="term" value="F:rRNA binding"/>
    <property type="evidence" value="ECO:0007669"/>
    <property type="project" value="UniProtKB-UniRule"/>
</dbReference>
<dbReference type="GO" id="GO:0003735">
    <property type="term" value="F:structural constituent of ribosome"/>
    <property type="evidence" value="ECO:0007669"/>
    <property type="project" value="InterPro"/>
</dbReference>
<dbReference type="GO" id="GO:0006412">
    <property type="term" value="P:translation"/>
    <property type="evidence" value="ECO:0007669"/>
    <property type="project" value="UniProtKB-UniRule"/>
</dbReference>
<dbReference type="Gene3D" id="3.10.430.100">
    <property type="entry name" value="Ribosomal protein L9, C-terminal domain"/>
    <property type="match status" value="1"/>
</dbReference>
<dbReference type="Gene3D" id="3.40.5.10">
    <property type="entry name" value="Ribosomal protein L9, N-terminal domain"/>
    <property type="match status" value="1"/>
</dbReference>
<dbReference type="HAMAP" id="MF_00503">
    <property type="entry name" value="Ribosomal_bL9"/>
    <property type="match status" value="1"/>
</dbReference>
<dbReference type="InterPro" id="IPR000244">
    <property type="entry name" value="Ribosomal_bL9"/>
</dbReference>
<dbReference type="InterPro" id="IPR009027">
    <property type="entry name" value="Ribosomal_bL9/RNase_H1_N"/>
</dbReference>
<dbReference type="InterPro" id="IPR020594">
    <property type="entry name" value="Ribosomal_bL9_bac/chp"/>
</dbReference>
<dbReference type="InterPro" id="IPR020069">
    <property type="entry name" value="Ribosomal_bL9_C"/>
</dbReference>
<dbReference type="InterPro" id="IPR036791">
    <property type="entry name" value="Ribosomal_bL9_C_sf"/>
</dbReference>
<dbReference type="InterPro" id="IPR020070">
    <property type="entry name" value="Ribosomal_bL9_N"/>
</dbReference>
<dbReference type="InterPro" id="IPR036935">
    <property type="entry name" value="Ribosomal_bL9_N_sf"/>
</dbReference>
<dbReference type="NCBIfam" id="TIGR00158">
    <property type="entry name" value="L9"/>
    <property type="match status" value="1"/>
</dbReference>
<dbReference type="PANTHER" id="PTHR21368">
    <property type="entry name" value="50S RIBOSOMAL PROTEIN L9"/>
    <property type="match status" value="1"/>
</dbReference>
<dbReference type="Pfam" id="PF03948">
    <property type="entry name" value="Ribosomal_L9_C"/>
    <property type="match status" value="1"/>
</dbReference>
<dbReference type="Pfam" id="PF01281">
    <property type="entry name" value="Ribosomal_L9_N"/>
    <property type="match status" value="1"/>
</dbReference>
<dbReference type="SUPFAM" id="SSF55658">
    <property type="entry name" value="L9 N-domain-like"/>
    <property type="match status" value="1"/>
</dbReference>
<dbReference type="SUPFAM" id="SSF55653">
    <property type="entry name" value="Ribosomal protein L9 C-domain"/>
    <property type="match status" value="1"/>
</dbReference>
<dbReference type="PROSITE" id="PS00651">
    <property type="entry name" value="RIBOSOMAL_L9"/>
    <property type="match status" value="1"/>
</dbReference>
<evidence type="ECO:0000255" key="1">
    <source>
        <dbReference type="HAMAP-Rule" id="MF_00503"/>
    </source>
</evidence>
<evidence type="ECO:0000305" key="2"/>